<dbReference type="EMBL" id="CP000237">
    <property type="protein sequence ID" value="ABD45882.1"/>
    <property type="molecule type" value="Genomic_DNA"/>
</dbReference>
<dbReference type="RefSeq" id="WP_011451668.1">
    <property type="nucleotide sequence ID" value="NC_007798.1"/>
</dbReference>
<dbReference type="SMR" id="Q2GED4"/>
<dbReference type="STRING" id="222891.NSE_0271"/>
<dbReference type="KEGG" id="nse:NSE_0271"/>
<dbReference type="eggNOG" id="COG0091">
    <property type="taxonomic scope" value="Bacteria"/>
</dbReference>
<dbReference type="HOGENOM" id="CLU_083987_3_0_5"/>
<dbReference type="OrthoDB" id="9805969at2"/>
<dbReference type="Proteomes" id="UP000001942">
    <property type="component" value="Chromosome"/>
</dbReference>
<dbReference type="GO" id="GO:0022625">
    <property type="term" value="C:cytosolic large ribosomal subunit"/>
    <property type="evidence" value="ECO:0007669"/>
    <property type="project" value="TreeGrafter"/>
</dbReference>
<dbReference type="GO" id="GO:0019843">
    <property type="term" value="F:rRNA binding"/>
    <property type="evidence" value="ECO:0007669"/>
    <property type="project" value="UniProtKB-UniRule"/>
</dbReference>
<dbReference type="GO" id="GO:0003735">
    <property type="term" value="F:structural constituent of ribosome"/>
    <property type="evidence" value="ECO:0007669"/>
    <property type="project" value="InterPro"/>
</dbReference>
<dbReference type="GO" id="GO:0006412">
    <property type="term" value="P:translation"/>
    <property type="evidence" value="ECO:0007669"/>
    <property type="project" value="UniProtKB-UniRule"/>
</dbReference>
<dbReference type="CDD" id="cd00336">
    <property type="entry name" value="Ribosomal_L22"/>
    <property type="match status" value="1"/>
</dbReference>
<dbReference type="Gene3D" id="3.90.470.10">
    <property type="entry name" value="Ribosomal protein L22/L17"/>
    <property type="match status" value="1"/>
</dbReference>
<dbReference type="HAMAP" id="MF_01331_B">
    <property type="entry name" value="Ribosomal_uL22_B"/>
    <property type="match status" value="1"/>
</dbReference>
<dbReference type="InterPro" id="IPR001063">
    <property type="entry name" value="Ribosomal_uL22"/>
</dbReference>
<dbReference type="InterPro" id="IPR005727">
    <property type="entry name" value="Ribosomal_uL22_bac/chlpt-type"/>
</dbReference>
<dbReference type="InterPro" id="IPR047867">
    <property type="entry name" value="Ribosomal_uL22_bac/org-type"/>
</dbReference>
<dbReference type="InterPro" id="IPR018260">
    <property type="entry name" value="Ribosomal_uL22_CS"/>
</dbReference>
<dbReference type="InterPro" id="IPR036394">
    <property type="entry name" value="Ribosomal_uL22_sf"/>
</dbReference>
<dbReference type="NCBIfam" id="TIGR01044">
    <property type="entry name" value="rplV_bact"/>
    <property type="match status" value="1"/>
</dbReference>
<dbReference type="PANTHER" id="PTHR13501">
    <property type="entry name" value="CHLOROPLAST 50S RIBOSOMAL PROTEIN L22-RELATED"/>
    <property type="match status" value="1"/>
</dbReference>
<dbReference type="PANTHER" id="PTHR13501:SF8">
    <property type="entry name" value="LARGE RIBOSOMAL SUBUNIT PROTEIN UL22M"/>
    <property type="match status" value="1"/>
</dbReference>
<dbReference type="Pfam" id="PF00237">
    <property type="entry name" value="Ribosomal_L22"/>
    <property type="match status" value="1"/>
</dbReference>
<dbReference type="SUPFAM" id="SSF54843">
    <property type="entry name" value="Ribosomal protein L22"/>
    <property type="match status" value="1"/>
</dbReference>
<dbReference type="PROSITE" id="PS00464">
    <property type="entry name" value="RIBOSOMAL_L22"/>
    <property type="match status" value="1"/>
</dbReference>
<comment type="function">
    <text evidence="1">This protein binds specifically to 23S rRNA; its binding is stimulated by other ribosomal proteins, e.g. L4, L17, and L20. It is important during the early stages of 50S assembly. It makes multiple contacts with different domains of the 23S rRNA in the assembled 50S subunit and ribosome (By similarity).</text>
</comment>
<comment type="function">
    <text evidence="1">The globular domain of the protein is located near the polypeptide exit tunnel on the outside of the subunit, while an extended beta-hairpin is found that lines the wall of the exit tunnel in the center of the 70S ribosome.</text>
</comment>
<comment type="subunit">
    <text evidence="1">Part of the 50S ribosomal subunit.</text>
</comment>
<comment type="similarity">
    <text evidence="1">Belongs to the universal ribosomal protein uL22 family.</text>
</comment>
<accession>Q2GED4</accession>
<evidence type="ECO:0000255" key="1">
    <source>
        <dbReference type="HAMAP-Rule" id="MF_01331"/>
    </source>
</evidence>
<evidence type="ECO:0000305" key="2"/>
<keyword id="KW-0687">Ribonucleoprotein</keyword>
<keyword id="KW-0689">Ribosomal protein</keyword>
<keyword id="KW-0694">RNA-binding</keyword>
<keyword id="KW-0699">rRNA-binding</keyword>
<name>RL22_NEOSM</name>
<protein>
    <recommendedName>
        <fullName evidence="1">Large ribosomal subunit protein uL22</fullName>
    </recommendedName>
    <alternativeName>
        <fullName evidence="2">50S ribosomal protein L22</fullName>
    </alternativeName>
</protein>
<sequence>MRAEYKNMKSSVQKVNLVADMIRGKGVDVARSQLLFLKKALAKPLSKVLMSSVANAQNNFGVDPDNLYVKEVFVGKGMSLKRFAARARGRSASIRKHYSNVSILLGVLDGSKG</sequence>
<feature type="chain" id="PRO_0000354497" description="Large ribosomal subunit protein uL22">
    <location>
        <begin position="1"/>
        <end position="113"/>
    </location>
</feature>
<reference key="1">
    <citation type="journal article" date="2006" name="PLoS Genet.">
        <title>Comparative genomics of emerging human ehrlichiosis agents.</title>
        <authorList>
            <person name="Dunning Hotopp J.C."/>
            <person name="Lin M."/>
            <person name="Madupu R."/>
            <person name="Crabtree J."/>
            <person name="Angiuoli S.V."/>
            <person name="Eisen J.A."/>
            <person name="Seshadri R."/>
            <person name="Ren Q."/>
            <person name="Wu M."/>
            <person name="Utterback T.R."/>
            <person name="Smith S."/>
            <person name="Lewis M."/>
            <person name="Khouri H."/>
            <person name="Zhang C."/>
            <person name="Niu H."/>
            <person name="Lin Q."/>
            <person name="Ohashi N."/>
            <person name="Zhi N."/>
            <person name="Nelson W.C."/>
            <person name="Brinkac L.M."/>
            <person name="Dodson R.J."/>
            <person name="Rosovitz M.J."/>
            <person name="Sundaram J.P."/>
            <person name="Daugherty S.C."/>
            <person name="Davidsen T."/>
            <person name="Durkin A.S."/>
            <person name="Gwinn M.L."/>
            <person name="Haft D.H."/>
            <person name="Selengut J.D."/>
            <person name="Sullivan S.A."/>
            <person name="Zafar N."/>
            <person name="Zhou L."/>
            <person name="Benahmed F."/>
            <person name="Forberger H."/>
            <person name="Halpin R."/>
            <person name="Mulligan S."/>
            <person name="Robinson J."/>
            <person name="White O."/>
            <person name="Rikihisa Y."/>
            <person name="Tettelin H."/>
        </authorList>
    </citation>
    <scope>NUCLEOTIDE SEQUENCE [LARGE SCALE GENOMIC DNA]</scope>
    <source>
        <strain>ATCC VR-367 / Miyayama</strain>
    </source>
</reference>
<organism>
    <name type="scientific">Neorickettsia sennetsu (strain ATCC VR-367 / Miyayama)</name>
    <name type="common">Ehrlichia sennetsu</name>
    <dbReference type="NCBI Taxonomy" id="222891"/>
    <lineage>
        <taxon>Bacteria</taxon>
        <taxon>Pseudomonadati</taxon>
        <taxon>Pseudomonadota</taxon>
        <taxon>Alphaproteobacteria</taxon>
        <taxon>Rickettsiales</taxon>
        <taxon>Anaplasmataceae</taxon>
        <taxon>Neorickettsia</taxon>
    </lineage>
</organism>
<proteinExistence type="inferred from homology"/>
<gene>
    <name evidence="1" type="primary">rplV</name>
    <name type="ordered locus">NSE_0271</name>
</gene>